<evidence type="ECO:0000255" key="1">
    <source>
        <dbReference type="HAMAP-Rule" id="MF_01393"/>
    </source>
</evidence>
<feature type="chain" id="PRO_0000362388" description="ATP synthase subunit a">
    <location>
        <begin position="1"/>
        <end position="271"/>
    </location>
</feature>
<feature type="transmembrane region" description="Helical" evidence="1">
    <location>
        <begin position="47"/>
        <end position="67"/>
    </location>
</feature>
<feature type="transmembrane region" description="Helical" evidence="1">
    <location>
        <begin position="107"/>
        <end position="127"/>
    </location>
</feature>
<feature type="transmembrane region" description="Helical" evidence="1">
    <location>
        <begin position="133"/>
        <end position="153"/>
    </location>
</feature>
<feature type="transmembrane region" description="Helical" evidence="1">
    <location>
        <begin position="209"/>
        <end position="229"/>
    </location>
</feature>
<feature type="transmembrane region" description="Helical" evidence="1">
    <location>
        <begin position="235"/>
        <end position="255"/>
    </location>
</feature>
<reference key="1">
    <citation type="journal article" date="2004" name="Science">
        <title>Illuminating the evolutionary history of chlamydiae.</title>
        <authorList>
            <person name="Horn M."/>
            <person name="Collingro A."/>
            <person name="Schmitz-Esser S."/>
            <person name="Beier C.L."/>
            <person name="Purkhold U."/>
            <person name="Fartmann B."/>
            <person name="Brandt P."/>
            <person name="Nyakatura G.J."/>
            <person name="Droege M."/>
            <person name="Frishman D."/>
            <person name="Rattei T."/>
            <person name="Mewes H.-W."/>
            <person name="Wagner M."/>
        </authorList>
    </citation>
    <scope>NUCLEOTIDE SEQUENCE [LARGE SCALE GENOMIC DNA]</scope>
    <source>
        <strain>UWE25</strain>
    </source>
</reference>
<sequence length="271" mass="30623">MIMGQYLFWLANAHEPIENRIPELPNFISVLYHRFQHTTWAQFLHRWENIIFAILVASLISLVAYLGARKKEIIPSKFQNLLEIAVEKFSHLILEVLGPEGKAYIPFLGTLFIYIFTMNIFGMVPLMKAPSSSLNITAALAICVFCLVQFLNIRNMGIFGFLYHLAGSPKSMLEWLLAPLMFSLEIISQLSRPLTLALRLFGNVLGEDILIGTFALMGVVMISSVETFVGIPLQLPFMFLGLLTSFMQALVFTLLSTVYILLSMHKEGEKN</sequence>
<gene>
    <name evidence="1" type="primary">atpB</name>
    <name type="ordered locus">pc1674</name>
</gene>
<accession>Q6MAK1</accession>
<protein>
    <recommendedName>
        <fullName evidence="1">ATP synthase subunit a</fullName>
    </recommendedName>
    <alternativeName>
        <fullName evidence="1">ATP synthase F0 sector subunit a</fullName>
    </alternativeName>
    <alternativeName>
        <fullName evidence="1">F-ATPase subunit 6</fullName>
    </alternativeName>
</protein>
<dbReference type="EMBL" id="BX908798">
    <property type="protein sequence ID" value="CAF24398.1"/>
    <property type="molecule type" value="Genomic_DNA"/>
</dbReference>
<dbReference type="RefSeq" id="WP_011176220.1">
    <property type="nucleotide sequence ID" value="NC_005861.2"/>
</dbReference>
<dbReference type="SMR" id="Q6MAK1"/>
<dbReference type="STRING" id="264201.pc1674"/>
<dbReference type="KEGG" id="pcu:PC_RS08005"/>
<dbReference type="eggNOG" id="COG0356">
    <property type="taxonomic scope" value="Bacteria"/>
</dbReference>
<dbReference type="HOGENOM" id="CLU_041018_2_2_0"/>
<dbReference type="OrthoDB" id="9789241at2"/>
<dbReference type="Proteomes" id="UP000000529">
    <property type="component" value="Chromosome"/>
</dbReference>
<dbReference type="GO" id="GO:0005886">
    <property type="term" value="C:plasma membrane"/>
    <property type="evidence" value="ECO:0007669"/>
    <property type="project" value="UniProtKB-SubCell"/>
</dbReference>
<dbReference type="GO" id="GO:0045259">
    <property type="term" value="C:proton-transporting ATP synthase complex"/>
    <property type="evidence" value="ECO:0007669"/>
    <property type="project" value="UniProtKB-KW"/>
</dbReference>
<dbReference type="GO" id="GO:0046933">
    <property type="term" value="F:proton-transporting ATP synthase activity, rotational mechanism"/>
    <property type="evidence" value="ECO:0007669"/>
    <property type="project" value="UniProtKB-UniRule"/>
</dbReference>
<dbReference type="GO" id="GO:0042777">
    <property type="term" value="P:proton motive force-driven plasma membrane ATP synthesis"/>
    <property type="evidence" value="ECO:0007669"/>
    <property type="project" value="TreeGrafter"/>
</dbReference>
<dbReference type="CDD" id="cd00310">
    <property type="entry name" value="ATP-synt_Fo_a_6"/>
    <property type="match status" value="1"/>
</dbReference>
<dbReference type="Gene3D" id="1.20.120.220">
    <property type="entry name" value="ATP synthase, F0 complex, subunit A"/>
    <property type="match status" value="1"/>
</dbReference>
<dbReference type="HAMAP" id="MF_01393">
    <property type="entry name" value="ATP_synth_a_bact"/>
    <property type="match status" value="1"/>
</dbReference>
<dbReference type="InterPro" id="IPR045082">
    <property type="entry name" value="ATP_syn_F0_a_bact/chloroplast"/>
</dbReference>
<dbReference type="InterPro" id="IPR000568">
    <property type="entry name" value="ATP_synth_F0_asu"/>
</dbReference>
<dbReference type="InterPro" id="IPR023011">
    <property type="entry name" value="ATP_synth_F0_asu_AS"/>
</dbReference>
<dbReference type="InterPro" id="IPR035908">
    <property type="entry name" value="F0_ATP_A_sf"/>
</dbReference>
<dbReference type="NCBIfam" id="TIGR01131">
    <property type="entry name" value="ATP_synt_6_or_A"/>
    <property type="match status" value="1"/>
</dbReference>
<dbReference type="PANTHER" id="PTHR42823">
    <property type="entry name" value="ATP SYNTHASE SUBUNIT A, CHLOROPLASTIC"/>
    <property type="match status" value="1"/>
</dbReference>
<dbReference type="PANTHER" id="PTHR42823:SF3">
    <property type="entry name" value="ATP SYNTHASE SUBUNIT A, CHLOROPLASTIC"/>
    <property type="match status" value="1"/>
</dbReference>
<dbReference type="Pfam" id="PF00119">
    <property type="entry name" value="ATP-synt_A"/>
    <property type="match status" value="1"/>
</dbReference>
<dbReference type="PRINTS" id="PR00123">
    <property type="entry name" value="ATPASEA"/>
</dbReference>
<dbReference type="SUPFAM" id="SSF81336">
    <property type="entry name" value="F1F0 ATP synthase subunit A"/>
    <property type="match status" value="1"/>
</dbReference>
<dbReference type="PROSITE" id="PS00449">
    <property type="entry name" value="ATPASE_A"/>
    <property type="match status" value="1"/>
</dbReference>
<organism>
    <name type="scientific">Protochlamydia amoebophila (strain UWE25)</name>
    <dbReference type="NCBI Taxonomy" id="264201"/>
    <lineage>
        <taxon>Bacteria</taxon>
        <taxon>Pseudomonadati</taxon>
        <taxon>Chlamydiota</taxon>
        <taxon>Chlamydiia</taxon>
        <taxon>Parachlamydiales</taxon>
        <taxon>Parachlamydiaceae</taxon>
        <taxon>Candidatus Protochlamydia</taxon>
    </lineage>
</organism>
<keyword id="KW-0066">ATP synthesis</keyword>
<keyword id="KW-0997">Cell inner membrane</keyword>
<keyword id="KW-1003">Cell membrane</keyword>
<keyword id="KW-0138">CF(0)</keyword>
<keyword id="KW-0375">Hydrogen ion transport</keyword>
<keyword id="KW-0406">Ion transport</keyword>
<keyword id="KW-0472">Membrane</keyword>
<keyword id="KW-1185">Reference proteome</keyword>
<keyword id="KW-0812">Transmembrane</keyword>
<keyword id="KW-1133">Transmembrane helix</keyword>
<keyword id="KW-0813">Transport</keyword>
<proteinExistence type="inferred from homology"/>
<comment type="function">
    <text evidence="1">Key component of the proton channel; it plays a direct role in the translocation of protons across the membrane.</text>
</comment>
<comment type="subunit">
    <text evidence="1">F-type ATPases have 2 components, CF(1) - the catalytic core - and CF(0) - the membrane proton channel. CF(1) has five subunits: alpha(3), beta(3), gamma(1), delta(1), epsilon(1). CF(0) has three main subunits: a(1), b(2) and c(9-12). The alpha and beta chains form an alternating ring which encloses part of the gamma chain. CF(1) is attached to CF(0) by a central stalk formed by the gamma and epsilon chains, while a peripheral stalk is formed by the delta and b chains.</text>
</comment>
<comment type="subcellular location">
    <subcellularLocation>
        <location evidence="1">Cell inner membrane</location>
        <topology evidence="1">Multi-pass membrane protein</topology>
    </subcellularLocation>
</comment>
<comment type="similarity">
    <text evidence="1">Belongs to the ATPase A chain family.</text>
</comment>
<name>ATP6_PARUW</name>